<dbReference type="EC" id="2.5.1.6" evidence="1"/>
<dbReference type="EMBL" id="AM747720">
    <property type="protein sequence ID" value="CAR50819.1"/>
    <property type="molecule type" value="Genomic_DNA"/>
</dbReference>
<dbReference type="RefSeq" id="WP_006482984.1">
    <property type="nucleotide sequence ID" value="NC_011000.1"/>
</dbReference>
<dbReference type="SMR" id="B4E800"/>
<dbReference type="GeneID" id="67905457"/>
<dbReference type="KEGG" id="bcj:BCAL0509"/>
<dbReference type="eggNOG" id="COG0192">
    <property type="taxonomic scope" value="Bacteria"/>
</dbReference>
<dbReference type="HOGENOM" id="CLU_041802_1_1_4"/>
<dbReference type="BioCyc" id="BCEN216591:G1G1V-581-MONOMER"/>
<dbReference type="UniPathway" id="UPA00315">
    <property type="reaction ID" value="UER00080"/>
</dbReference>
<dbReference type="Proteomes" id="UP000001035">
    <property type="component" value="Chromosome 1"/>
</dbReference>
<dbReference type="GO" id="GO:0005737">
    <property type="term" value="C:cytoplasm"/>
    <property type="evidence" value="ECO:0007669"/>
    <property type="project" value="UniProtKB-SubCell"/>
</dbReference>
<dbReference type="GO" id="GO:0005524">
    <property type="term" value="F:ATP binding"/>
    <property type="evidence" value="ECO:0007669"/>
    <property type="project" value="UniProtKB-UniRule"/>
</dbReference>
<dbReference type="GO" id="GO:0000287">
    <property type="term" value="F:magnesium ion binding"/>
    <property type="evidence" value="ECO:0007669"/>
    <property type="project" value="UniProtKB-UniRule"/>
</dbReference>
<dbReference type="GO" id="GO:0004478">
    <property type="term" value="F:methionine adenosyltransferase activity"/>
    <property type="evidence" value="ECO:0007669"/>
    <property type="project" value="UniProtKB-UniRule"/>
</dbReference>
<dbReference type="GO" id="GO:0006730">
    <property type="term" value="P:one-carbon metabolic process"/>
    <property type="evidence" value="ECO:0007669"/>
    <property type="project" value="UniProtKB-KW"/>
</dbReference>
<dbReference type="GO" id="GO:0006556">
    <property type="term" value="P:S-adenosylmethionine biosynthetic process"/>
    <property type="evidence" value="ECO:0007669"/>
    <property type="project" value="UniProtKB-UniRule"/>
</dbReference>
<dbReference type="CDD" id="cd18079">
    <property type="entry name" value="S-AdoMet_synt"/>
    <property type="match status" value="1"/>
</dbReference>
<dbReference type="FunFam" id="3.30.300.10:FF:000003">
    <property type="entry name" value="S-adenosylmethionine synthase"/>
    <property type="match status" value="1"/>
</dbReference>
<dbReference type="FunFam" id="3.30.300.10:FF:000004">
    <property type="entry name" value="S-adenosylmethionine synthase"/>
    <property type="match status" value="1"/>
</dbReference>
<dbReference type="Gene3D" id="3.30.300.10">
    <property type="match status" value="3"/>
</dbReference>
<dbReference type="HAMAP" id="MF_00086">
    <property type="entry name" value="S_AdoMet_synth1"/>
    <property type="match status" value="1"/>
</dbReference>
<dbReference type="InterPro" id="IPR022631">
    <property type="entry name" value="ADOMET_SYNTHASE_CS"/>
</dbReference>
<dbReference type="InterPro" id="IPR022630">
    <property type="entry name" value="S-AdoMet_synt_C"/>
</dbReference>
<dbReference type="InterPro" id="IPR022629">
    <property type="entry name" value="S-AdoMet_synt_central"/>
</dbReference>
<dbReference type="InterPro" id="IPR022628">
    <property type="entry name" value="S-AdoMet_synt_N"/>
</dbReference>
<dbReference type="InterPro" id="IPR002133">
    <property type="entry name" value="S-AdoMet_synthetase"/>
</dbReference>
<dbReference type="InterPro" id="IPR022636">
    <property type="entry name" value="S-AdoMet_synthetase_sfam"/>
</dbReference>
<dbReference type="NCBIfam" id="TIGR01034">
    <property type="entry name" value="metK"/>
    <property type="match status" value="1"/>
</dbReference>
<dbReference type="PANTHER" id="PTHR11964">
    <property type="entry name" value="S-ADENOSYLMETHIONINE SYNTHETASE"/>
    <property type="match status" value="1"/>
</dbReference>
<dbReference type="Pfam" id="PF02773">
    <property type="entry name" value="S-AdoMet_synt_C"/>
    <property type="match status" value="1"/>
</dbReference>
<dbReference type="Pfam" id="PF02772">
    <property type="entry name" value="S-AdoMet_synt_M"/>
    <property type="match status" value="1"/>
</dbReference>
<dbReference type="Pfam" id="PF00438">
    <property type="entry name" value="S-AdoMet_synt_N"/>
    <property type="match status" value="1"/>
</dbReference>
<dbReference type="PIRSF" id="PIRSF000497">
    <property type="entry name" value="MAT"/>
    <property type="match status" value="1"/>
</dbReference>
<dbReference type="SUPFAM" id="SSF55973">
    <property type="entry name" value="S-adenosylmethionine synthetase"/>
    <property type="match status" value="3"/>
</dbReference>
<dbReference type="PROSITE" id="PS00376">
    <property type="entry name" value="ADOMET_SYNTHASE_1"/>
    <property type="match status" value="1"/>
</dbReference>
<dbReference type="PROSITE" id="PS00377">
    <property type="entry name" value="ADOMET_SYNTHASE_2"/>
    <property type="match status" value="1"/>
</dbReference>
<keyword id="KW-0067">ATP-binding</keyword>
<keyword id="KW-0963">Cytoplasm</keyword>
<keyword id="KW-0460">Magnesium</keyword>
<keyword id="KW-0479">Metal-binding</keyword>
<keyword id="KW-0547">Nucleotide-binding</keyword>
<keyword id="KW-0554">One-carbon metabolism</keyword>
<keyword id="KW-0630">Potassium</keyword>
<keyword id="KW-0808">Transferase</keyword>
<reference key="1">
    <citation type="journal article" date="2009" name="J. Bacteriol.">
        <title>The genome of Burkholderia cenocepacia J2315, an epidemic pathogen of cystic fibrosis patients.</title>
        <authorList>
            <person name="Holden M.T."/>
            <person name="Seth-Smith H.M."/>
            <person name="Crossman L.C."/>
            <person name="Sebaihia M."/>
            <person name="Bentley S.D."/>
            <person name="Cerdeno-Tarraga A.M."/>
            <person name="Thomson N.R."/>
            <person name="Bason N."/>
            <person name="Quail M.A."/>
            <person name="Sharp S."/>
            <person name="Cherevach I."/>
            <person name="Churcher C."/>
            <person name="Goodhead I."/>
            <person name="Hauser H."/>
            <person name="Holroyd N."/>
            <person name="Mungall K."/>
            <person name="Scott P."/>
            <person name="Walker D."/>
            <person name="White B."/>
            <person name="Rose H."/>
            <person name="Iversen P."/>
            <person name="Mil-Homens D."/>
            <person name="Rocha E.P."/>
            <person name="Fialho A.M."/>
            <person name="Baldwin A."/>
            <person name="Dowson C."/>
            <person name="Barrell B.G."/>
            <person name="Govan J.R."/>
            <person name="Vandamme P."/>
            <person name="Hart C.A."/>
            <person name="Mahenthiralingam E."/>
            <person name="Parkhill J."/>
        </authorList>
    </citation>
    <scope>NUCLEOTIDE SEQUENCE [LARGE SCALE GENOMIC DNA]</scope>
    <source>
        <strain>ATCC BAA-245 / DSM 16553 / LMG 16656 / NCTC 13227 / J2315 / CF5610</strain>
    </source>
</reference>
<gene>
    <name evidence="1" type="primary">metK</name>
    <name type="ordered locus">BceJ2315_05060</name>
    <name type="ORF">BCAL0509</name>
</gene>
<accession>B4E800</accession>
<name>METK_BURCJ</name>
<organism>
    <name type="scientific">Burkholderia cenocepacia (strain ATCC BAA-245 / DSM 16553 / LMG 16656 / NCTC 13227 / J2315 / CF5610)</name>
    <name type="common">Burkholderia cepacia (strain J2315)</name>
    <dbReference type="NCBI Taxonomy" id="216591"/>
    <lineage>
        <taxon>Bacteria</taxon>
        <taxon>Pseudomonadati</taxon>
        <taxon>Pseudomonadota</taxon>
        <taxon>Betaproteobacteria</taxon>
        <taxon>Burkholderiales</taxon>
        <taxon>Burkholderiaceae</taxon>
        <taxon>Burkholderia</taxon>
        <taxon>Burkholderia cepacia complex</taxon>
    </lineage>
</organism>
<proteinExistence type="inferred from homology"/>
<protein>
    <recommendedName>
        <fullName evidence="1">S-adenosylmethionine synthase</fullName>
        <shortName evidence="1">AdoMet synthase</shortName>
        <ecNumber evidence="1">2.5.1.6</ecNumber>
    </recommendedName>
    <alternativeName>
        <fullName evidence="1">MAT</fullName>
    </alternativeName>
    <alternativeName>
        <fullName evidence="1">Methionine adenosyltransferase</fullName>
    </alternativeName>
</protein>
<sequence length="395" mass="42694">MANDYLFTSESVSEGHPDKVADQISDAILDAILEQDKYSRVAAETLCNTGLVVLAGEITTTANIDYIQIARDTIKRIGYDNTDYGIDYKGCAVLVAYDKQSPDIAQGVDRAHDDNLDQGAGDQGLMFGYACDETPELMPLPIYLSHRLVERQASLRRDGRLQWLRPDAKSQVTVRYVDGKPDSIDTVVLSTQHAPDIELPALREAVIEEIIKPTLPADLIKGDIKFLVNPTGRFVIGGPQGDCGLTGRKIIVDTYGGAAPHGGGAFSGKDPSKVDRSAAYAGRYVAKNIVAAGLASRALIQVSYAIGVAEPTSVMVNTFGTGRVSDAVITKLVREHFDLRPKGIIKMLDLLRPIYEKTAAYGHFGREEPEFSWEATDKALALAEAAGVEPTARVA</sequence>
<feature type="chain" id="PRO_1000093030" description="S-adenosylmethionine synthase">
    <location>
        <begin position="1"/>
        <end position="395"/>
    </location>
</feature>
<feature type="region of interest" description="Flexible loop" evidence="1">
    <location>
        <begin position="100"/>
        <end position="110"/>
    </location>
</feature>
<feature type="binding site" description="in other chain" evidence="1">
    <location>
        <position position="16"/>
    </location>
    <ligand>
        <name>ATP</name>
        <dbReference type="ChEBI" id="CHEBI:30616"/>
        <note>ligand shared between two neighboring subunits</note>
    </ligand>
</feature>
<feature type="binding site" evidence="1">
    <location>
        <position position="18"/>
    </location>
    <ligand>
        <name>Mg(2+)</name>
        <dbReference type="ChEBI" id="CHEBI:18420"/>
    </ligand>
</feature>
<feature type="binding site" evidence="1">
    <location>
        <position position="44"/>
    </location>
    <ligand>
        <name>K(+)</name>
        <dbReference type="ChEBI" id="CHEBI:29103"/>
    </ligand>
</feature>
<feature type="binding site" description="in other chain" evidence="1">
    <location>
        <position position="57"/>
    </location>
    <ligand>
        <name>L-methionine</name>
        <dbReference type="ChEBI" id="CHEBI:57844"/>
        <note>ligand shared between two neighboring subunits</note>
    </ligand>
</feature>
<feature type="binding site" description="in other chain" evidence="1">
    <location>
        <position position="100"/>
    </location>
    <ligand>
        <name>L-methionine</name>
        <dbReference type="ChEBI" id="CHEBI:57844"/>
        <note>ligand shared between two neighboring subunits</note>
    </ligand>
</feature>
<feature type="binding site" description="in other chain" evidence="1">
    <location>
        <begin position="167"/>
        <end position="169"/>
    </location>
    <ligand>
        <name>ATP</name>
        <dbReference type="ChEBI" id="CHEBI:30616"/>
        <note>ligand shared between two neighboring subunits</note>
    </ligand>
</feature>
<feature type="binding site" description="in other chain" evidence="1">
    <location>
        <begin position="233"/>
        <end position="234"/>
    </location>
    <ligand>
        <name>ATP</name>
        <dbReference type="ChEBI" id="CHEBI:30616"/>
        <note>ligand shared between two neighboring subunits</note>
    </ligand>
</feature>
<feature type="binding site" evidence="1">
    <location>
        <position position="242"/>
    </location>
    <ligand>
        <name>ATP</name>
        <dbReference type="ChEBI" id="CHEBI:30616"/>
        <note>ligand shared between two neighboring subunits</note>
    </ligand>
</feature>
<feature type="binding site" evidence="1">
    <location>
        <position position="242"/>
    </location>
    <ligand>
        <name>L-methionine</name>
        <dbReference type="ChEBI" id="CHEBI:57844"/>
        <note>ligand shared between two neighboring subunits</note>
    </ligand>
</feature>
<feature type="binding site" description="in other chain" evidence="1">
    <location>
        <begin position="248"/>
        <end position="249"/>
    </location>
    <ligand>
        <name>ATP</name>
        <dbReference type="ChEBI" id="CHEBI:30616"/>
        <note>ligand shared between two neighboring subunits</note>
    </ligand>
</feature>
<feature type="binding site" evidence="1">
    <location>
        <position position="265"/>
    </location>
    <ligand>
        <name>ATP</name>
        <dbReference type="ChEBI" id="CHEBI:30616"/>
        <note>ligand shared between two neighboring subunits</note>
    </ligand>
</feature>
<feature type="binding site" evidence="1">
    <location>
        <position position="269"/>
    </location>
    <ligand>
        <name>ATP</name>
        <dbReference type="ChEBI" id="CHEBI:30616"/>
        <note>ligand shared between two neighboring subunits</note>
    </ligand>
</feature>
<feature type="binding site" description="in other chain" evidence="1">
    <location>
        <position position="273"/>
    </location>
    <ligand>
        <name>L-methionine</name>
        <dbReference type="ChEBI" id="CHEBI:57844"/>
        <note>ligand shared between two neighboring subunits</note>
    </ligand>
</feature>
<evidence type="ECO:0000255" key="1">
    <source>
        <dbReference type="HAMAP-Rule" id="MF_00086"/>
    </source>
</evidence>
<comment type="function">
    <text evidence="1">Catalyzes the formation of S-adenosylmethionine (AdoMet) from methionine and ATP. The overall synthetic reaction is composed of two sequential steps, AdoMet formation and the subsequent tripolyphosphate hydrolysis which occurs prior to release of AdoMet from the enzyme.</text>
</comment>
<comment type="catalytic activity">
    <reaction evidence="1">
        <text>L-methionine + ATP + H2O = S-adenosyl-L-methionine + phosphate + diphosphate</text>
        <dbReference type="Rhea" id="RHEA:21080"/>
        <dbReference type="ChEBI" id="CHEBI:15377"/>
        <dbReference type="ChEBI" id="CHEBI:30616"/>
        <dbReference type="ChEBI" id="CHEBI:33019"/>
        <dbReference type="ChEBI" id="CHEBI:43474"/>
        <dbReference type="ChEBI" id="CHEBI:57844"/>
        <dbReference type="ChEBI" id="CHEBI:59789"/>
        <dbReference type="EC" id="2.5.1.6"/>
    </reaction>
</comment>
<comment type="cofactor">
    <cofactor evidence="1">
        <name>Mg(2+)</name>
        <dbReference type="ChEBI" id="CHEBI:18420"/>
    </cofactor>
    <text evidence="1">Binds 2 divalent ions per subunit.</text>
</comment>
<comment type="cofactor">
    <cofactor evidence="1">
        <name>K(+)</name>
        <dbReference type="ChEBI" id="CHEBI:29103"/>
    </cofactor>
    <text evidence="1">Binds 1 potassium ion per subunit.</text>
</comment>
<comment type="pathway">
    <text evidence="1">Amino-acid biosynthesis; S-adenosyl-L-methionine biosynthesis; S-adenosyl-L-methionine from L-methionine: step 1/1.</text>
</comment>
<comment type="subunit">
    <text evidence="1">Homotetramer; dimer of dimers.</text>
</comment>
<comment type="subcellular location">
    <subcellularLocation>
        <location evidence="1">Cytoplasm</location>
    </subcellularLocation>
</comment>
<comment type="similarity">
    <text evidence="1">Belongs to the AdoMet synthase family.</text>
</comment>